<accession>Q8N0U7</accession>
<accession>Q6ZU07</accession>
<accession>Q8IVS0</accession>
<protein>
    <recommendedName>
        <fullName>Uncharacterized protein C1orf87</fullName>
    </recommendedName>
</protein>
<gene>
    <name type="primary">C1orf87</name>
</gene>
<proteinExistence type="evidence at protein level"/>
<organism>
    <name type="scientific">Homo sapiens</name>
    <name type="common">Human</name>
    <dbReference type="NCBI Taxonomy" id="9606"/>
    <lineage>
        <taxon>Eukaryota</taxon>
        <taxon>Metazoa</taxon>
        <taxon>Chordata</taxon>
        <taxon>Craniata</taxon>
        <taxon>Vertebrata</taxon>
        <taxon>Euteleostomi</taxon>
        <taxon>Mammalia</taxon>
        <taxon>Eutheria</taxon>
        <taxon>Euarchontoglires</taxon>
        <taxon>Primates</taxon>
        <taxon>Haplorrhini</taxon>
        <taxon>Catarrhini</taxon>
        <taxon>Hominidae</taxon>
        <taxon>Homo</taxon>
    </lineage>
</organism>
<feature type="chain" id="PRO_0000284489" description="Uncharacterized protein C1orf87">
    <location>
        <begin position="1"/>
        <end position="546"/>
    </location>
</feature>
<feature type="region of interest" description="Disordered" evidence="1">
    <location>
        <begin position="37"/>
        <end position="101"/>
    </location>
</feature>
<feature type="region of interest" description="Disordered" evidence="1">
    <location>
        <begin position="269"/>
        <end position="300"/>
    </location>
</feature>
<feature type="region of interest" description="Disordered" evidence="1">
    <location>
        <begin position="392"/>
        <end position="443"/>
    </location>
</feature>
<feature type="compositionally biased region" description="Basic and acidic residues" evidence="1">
    <location>
        <begin position="81"/>
        <end position="93"/>
    </location>
</feature>
<feature type="compositionally biased region" description="Basic and acidic residues" evidence="1">
    <location>
        <begin position="274"/>
        <end position="283"/>
    </location>
</feature>
<feature type="compositionally biased region" description="Low complexity" evidence="1">
    <location>
        <begin position="284"/>
        <end position="298"/>
    </location>
</feature>
<feature type="splice variant" id="VSP_024540" description="In isoform 3." evidence="5">
    <location>
        <begin position="1"/>
        <end position="408"/>
    </location>
</feature>
<feature type="splice variant" id="VSP_024541" description="In isoform 2." evidence="4">
    <location>
        <begin position="1"/>
        <end position="366"/>
    </location>
</feature>
<feature type="splice variant" id="VSP_024542" description="In isoform 2." evidence="4">
    <original>QDLGYQNEIKWQNFVEMLTRASSDLLSDLPT</original>
    <variation>MSRGCSSDLRFHTWLGLRMLKNIIAVALLML</variation>
    <location>
        <begin position="367"/>
        <end position="397"/>
    </location>
</feature>
<feature type="sequence variant" id="VAR_035493" description="In a breast cancer sample; somatic mutation." evidence="3">
    <original>Q</original>
    <variation>E</variation>
    <location>
        <position position="151"/>
    </location>
</feature>
<feature type="sequence variant" id="VAR_031745" description="In dbSNP:rs12737449.">
    <original>L</original>
    <variation>V</variation>
    <location>
        <position position="185"/>
    </location>
</feature>
<feature type="sequence variant" id="VAR_031746" description="In dbSNP:rs17120025.">
    <original>N</original>
    <variation>D</variation>
    <location>
        <position position="301"/>
    </location>
</feature>
<feature type="sequence variant" id="VAR_031747" description="In dbSNP:rs626251." evidence="2">
    <original>K</original>
    <variation>E</variation>
    <location>
        <position position="403"/>
    </location>
</feature>
<feature type="sequence variant" id="VAR_031748" description="In dbSNP:rs35260089.">
    <original>A</original>
    <variation>P</variation>
    <location>
        <position position="406"/>
    </location>
</feature>
<keyword id="KW-0025">Alternative splicing</keyword>
<keyword id="KW-1267">Proteomics identification</keyword>
<keyword id="KW-1185">Reference proteome</keyword>
<reference key="1">
    <citation type="journal article" date="2004" name="Nat. Genet.">
        <title>Complete sequencing and characterization of 21,243 full-length human cDNAs.</title>
        <authorList>
            <person name="Ota T."/>
            <person name="Suzuki Y."/>
            <person name="Nishikawa T."/>
            <person name="Otsuki T."/>
            <person name="Sugiyama T."/>
            <person name="Irie R."/>
            <person name="Wakamatsu A."/>
            <person name="Hayashi K."/>
            <person name="Sato H."/>
            <person name="Nagai K."/>
            <person name="Kimura K."/>
            <person name="Makita H."/>
            <person name="Sekine M."/>
            <person name="Obayashi M."/>
            <person name="Nishi T."/>
            <person name="Shibahara T."/>
            <person name="Tanaka T."/>
            <person name="Ishii S."/>
            <person name="Yamamoto J."/>
            <person name="Saito K."/>
            <person name="Kawai Y."/>
            <person name="Isono Y."/>
            <person name="Nakamura Y."/>
            <person name="Nagahari K."/>
            <person name="Murakami K."/>
            <person name="Yasuda T."/>
            <person name="Iwayanagi T."/>
            <person name="Wagatsuma M."/>
            <person name="Shiratori A."/>
            <person name="Sudo H."/>
            <person name="Hosoiri T."/>
            <person name="Kaku Y."/>
            <person name="Kodaira H."/>
            <person name="Kondo H."/>
            <person name="Sugawara M."/>
            <person name="Takahashi M."/>
            <person name="Kanda K."/>
            <person name="Yokoi T."/>
            <person name="Furuya T."/>
            <person name="Kikkawa E."/>
            <person name="Omura Y."/>
            <person name="Abe K."/>
            <person name="Kamihara K."/>
            <person name="Katsuta N."/>
            <person name="Sato K."/>
            <person name="Tanikawa M."/>
            <person name="Yamazaki M."/>
            <person name="Ninomiya K."/>
            <person name="Ishibashi T."/>
            <person name="Yamashita H."/>
            <person name="Murakawa K."/>
            <person name="Fujimori K."/>
            <person name="Tanai H."/>
            <person name="Kimata M."/>
            <person name="Watanabe M."/>
            <person name="Hiraoka S."/>
            <person name="Chiba Y."/>
            <person name="Ishida S."/>
            <person name="Ono Y."/>
            <person name="Takiguchi S."/>
            <person name="Watanabe S."/>
            <person name="Yosida M."/>
            <person name="Hotuta T."/>
            <person name="Kusano J."/>
            <person name="Kanehori K."/>
            <person name="Takahashi-Fujii A."/>
            <person name="Hara H."/>
            <person name="Tanase T.-O."/>
            <person name="Nomura Y."/>
            <person name="Togiya S."/>
            <person name="Komai F."/>
            <person name="Hara R."/>
            <person name="Takeuchi K."/>
            <person name="Arita M."/>
            <person name="Imose N."/>
            <person name="Musashino K."/>
            <person name="Yuuki H."/>
            <person name="Oshima A."/>
            <person name="Sasaki N."/>
            <person name="Aotsuka S."/>
            <person name="Yoshikawa Y."/>
            <person name="Matsunawa H."/>
            <person name="Ichihara T."/>
            <person name="Shiohata N."/>
            <person name="Sano S."/>
            <person name="Moriya S."/>
            <person name="Momiyama H."/>
            <person name="Satoh N."/>
            <person name="Takami S."/>
            <person name="Terashima Y."/>
            <person name="Suzuki O."/>
            <person name="Nakagawa S."/>
            <person name="Senoh A."/>
            <person name="Mizoguchi H."/>
            <person name="Goto Y."/>
            <person name="Shimizu F."/>
            <person name="Wakebe H."/>
            <person name="Hishigaki H."/>
            <person name="Watanabe T."/>
            <person name="Sugiyama A."/>
            <person name="Takemoto M."/>
            <person name="Kawakami B."/>
            <person name="Yamazaki M."/>
            <person name="Watanabe K."/>
            <person name="Kumagai A."/>
            <person name="Itakura S."/>
            <person name="Fukuzumi Y."/>
            <person name="Fujimori Y."/>
            <person name="Komiyama M."/>
            <person name="Tashiro H."/>
            <person name="Tanigami A."/>
            <person name="Fujiwara T."/>
            <person name="Ono T."/>
            <person name="Yamada K."/>
            <person name="Fujii Y."/>
            <person name="Ozaki K."/>
            <person name="Hirao M."/>
            <person name="Ohmori Y."/>
            <person name="Kawabata A."/>
            <person name="Hikiji T."/>
            <person name="Kobatake N."/>
            <person name="Inagaki H."/>
            <person name="Ikema Y."/>
            <person name="Okamoto S."/>
            <person name="Okitani R."/>
            <person name="Kawakami T."/>
            <person name="Noguchi S."/>
            <person name="Itoh T."/>
            <person name="Shigeta K."/>
            <person name="Senba T."/>
            <person name="Matsumura K."/>
            <person name="Nakajima Y."/>
            <person name="Mizuno T."/>
            <person name="Morinaga M."/>
            <person name="Sasaki M."/>
            <person name="Togashi T."/>
            <person name="Oyama M."/>
            <person name="Hata H."/>
            <person name="Watanabe M."/>
            <person name="Komatsu T."/>
            <person name="Mizushima-Sugano J."/>
            <person name="Satoh T."/>
            <person name="Shirai Y."/>
            <person name="Takahashi Y."/>
            <person name="Nakagawa K."/>
            <person name="Okumura K."/>
            <person name="Nagase T."/>
            <person name="Nomura N."/>
            <person name="Kikuchi H."/>
            <person name="Masuho Y."/>
            <person name="Yamashita R."/>
            <person name="Nakai K."/>
            <person name="Yada T."/>
            <person name="Nakamura Y."/>
            <person name="Ohara O."/>
            <person name="Isogai T."/>
            <person name="Sugano S."/>
        </authorList>
    </citation>
    <scope>NUCLEOTIDE SEQUENCE [LARGE SCALE MRNA] (ISOFORM 2)</scope>
    <scope>VARIANT GLU-403</scope>
    <source>
        <tissue>Testis</tissue>
    </source>
</reference>
<reference key="2">
    <citation type="journal article" date="2004" name="Genome Res.">
        <title>The status, quality, and expansion of the NIH full-length cDNA project: the Mammalian Gene Collection (MGC).</title>
        <authorList>
            <consortium name="The MGC Project Team"/>
        </authorList>
    </citation>
    <scope>NUCLEOTIDE SEQUENCE [LARGE SCALE MRNA] (ISOFORMS 1 AND 3)</scope>
    <source>
        <tissue>Brain</tissue>
        <tissue>Lung</tissue>
    </source>
</reference>
<reference key="3">
    <citation type="journal article" date="2006" name="Science">
        <title>The consensus coding sequences of human breast and colorectal cancers.</title>
        <authorList>
            <person name="Sjoeblom T."/>
            <person name="Jones S."/>
            <person name="Wood L.D."/>
            <person name="Parsons D.W."/>
            <person name="Lin J."/>
            <person name="Barber T.D."/>
            <person name="Mandelker D."/>
            <person name="Leary R.J."/>
            <person name="Ptak J."/>
            <person name="Silliman N."/>
            <person name="Szabo S."/>
            <person name="Buckhaults P."/>
            <person name="Farrell C."/>
            <person name="Meeh P."/>
            <person name="Markowitz S.D."/>
            <person name="Willis J."/>
            <person name="Dawson D."/>
            <person name="Willson J.K.V."/>
            <person name="Gazdar A.F."/>
            <person name="Hartigan J."/>
            <person name="Wu L."/>
            <person name="Liu C."/>
            <person name="Parmigiani G."/>
            <person name="Park B.H."/>
            <person name="Bachman K.E."/>
            <person name="Papadopoulos N."/>
            <person name="Vogelstein B."/>
            <person name="Kinzler K.W."/>
            <person name="Velculescu V.E."/>
        </authorList>
    </citation>
    <scope>VARIANT [LARGE SCALE ANALYSIS] GLU-151</scope>
</reference>
<sequence length="546" mass="62035">MSSAWKTPRGSDAMPEIMVKIIGSKHFQYLVEKPKIKENDSLKTETQTMHQKPMTDNARQMSRDTPVPINFTDQQTTDNPDDVKEKKHPENNQKSENNQKLLTGANSSRFLDGNIPSQANVHCSSVPTGDQSLSYVHGIPRRKLRDWSLEQMVRGSSDQPEDIGQSPSGTTNEDAFLLALVRRELKSRPLSSNLLEKLQKELKILDPISSGFLLQSQLSRLFLKHEVPLQLPTVKILCQRFSKRGSPEMVNYEKLLWFLNSAASDYPQQNKAAADLRKTESHGTHSQSTPPQHSSSQPEVNRSLLEILKMALRTTNGRLNIDNLNLSFRKEDRSFSGCLPLPKVRAICGKHGLYLTLSLLETLLNHQDLGYQNEIKWQNFVEMLTRASSDLLSDLPTGKNEKKAPAPPMEPEVPEMSQSKTEHMKTPEEELQPESSPAETSACKDPLKPLKIRPVSQPFVNPAVKNKAEECETWIDRFRKLENALYLCDLSNTGVLEKERARRLIHNYNLIYNLSLSPQKIDQALRRFRSGENMLLEPALRYLKEL</sequence>
<dbReference type="EMBL" id="AK126061">
    <property type="protein sequence ID" value="BAC86420.1"/>
    <property type="molecule type" value="mRNA"/>
</dbReference>
<dbReference type="EMBL" id="BC027878">
    <property type="protein sequence ID" value="AAH27878.1"/>
    <property type="molecule type" value="mRNA"/>
</dbReference>
<dbReference type="EMBL" id="BC042203">
    <property type="protein sequence ID" value="AAH42203.1"/>
    <property type="molecule type" value="mRNA"/>
</dbReference>
<dbReference type="CCDS" id="CCDS614.1">
    <molecule id="Q8N0U7-1"/>
</dbReference>
<dbReference type="RefSeq" id="NP_689590.1">
    <molecule id="Q8N0U7-1"/>
    <property type="nucleotide sequence ID" value="NM_152377.3"/>
</dbReference>
<dbReference type="BioGRID" id="126083">
    <property type="interactions" value="22"/>
</dbReference>
<dbReference type="FunCoup" id="Q8N0U7">
    <property type="interactions" value="19"/>
</dbReference>
<dbReference type="IntAct" id="Q8N0U7">
    <property type="interactions" value="18"/>
</dbReference>
<dbReference type="STRING" id="9606.ENSP00000360244"/>
<dbReference type="GlyGen" id="Q8N0U7">
    <property type="glycosylation" value="1 site, 1 O-linked glycan (1 site)"/>
</dbReference>
<dbReference type="iPTMnet" id="Q8N0U7"/>
<dbReference type="PhosphoSitePlus" id="Q8N0U7"/>
<dbReference type="BioMuta" id="C1orf87"/>
<dbReference type="DMDM" id="74759752"/>
<dbReference type="jPOST" id="Q8N0U7"/>
<dbReference type="MassIVE" id="Q8N0U7"/>
<dbReference type="PaxDb" id="9606-ENSP00000360244"/>
<dbReference type="PeptideAtlas" id="Q8N0U7"/>
<dbReference type="ProteomicsDB" id="71460">
    <molecule id="Q8N0U7-1"/>
</dbReference>
<dbReference type="ProteomicsDB" id="71461">
    <molecule id="Q8N0U7-2"/>
</dbReference>
<dbReference type="ProteomicsDB" id="71462">
    <molecule id="Q8N0U7-3"/>
</dbReference>
<dbReference type="Antibodypedia" id="33284">
    <property type="antibodies" value="76 antibodies from 13 providers"/>
</dbReference>
<dbReference type="DNASU" id="127795"/>
<dbReference type="Ensembl" id="ENST00000371201.3">
    <molecule id="Q8N0U7-1"/>
    <property type="protein sequence ID" value="ENSP00000360244.3"/>
    <property type="gene ID" value="ENSG00000162598.13"/>
</dbReference>
<dbReference type="GeneID" id="127795"/>
<dbReference type="KEGG" id="hsa:127795"/>
<dbReference type="MANE-Select" id="ENST00000371201.3">
    <property type="protein sequence ID" value="ENSP00000360244.3"/>
    <property type="RefSeq nucleotide sequence ID" value="NM_152377.3"/>
    <property type="RefSeq protein sequence ID" value="NP_689590.1"/>
</dbReference>
<dbReference type="UCSC" id="uc001czs.3">
    <molecule id="Q8N0U7-1"/>
    <property type="organism name" value="human"/>
</dbReference>
<dbReference type="AGR" id="HGNC:28547"/>
<dbReference type="CTD" id="127795"/>
<dbReference type="DisGeNET" id="127795"/>
<dbReference type="GeneCards" id="C1orf87"/>
<dbReference type="HGNC" id="HGNC:28547">
    <property type="gene designation" value="C1orf87"/>
</dbReference>
<dbReference type="HPA" id="ENSG00000162598">
    <property type="expression patterns" value="Tissue enriched (fallopian)"/>
</dbReference>
<dbReference type="MIM" id="618860">
    <property type="type" value="gene"/>
</dbReference>
<dbReference type="neXtProt" id="NX_Q8N0U7"/>
<dbReference type="OpenTargets" id="ENSG00000162598"/>
<dbReference type="PharmGKB" id="PA142672471"/>
<dbReference type="VEuPathDB" id="HostDB:ENSG00000162598"/>
<dbReference type="eggNOG" id="ENOG502RIAR">
    <property type="taxonomic scope" value="Eukaryota"/>
</dbReference>
<dbReference type="GeneTree" id="ENSGT00390000008678"/>
<dbReference type="HOGENOM" id="CLU_040182_0_0_1"/>
<dbReference type="InParanoid" id="Q8N0U7"/>
<dbReference type="OMA" id="YVHGIPR"/>
<dbReference type="OrthoDB" id="9989690at2759"/>
<dbReference type="PAN-GO" id="Q8N0U7">
    <property type="GO annotations" value="0 GO annotations based on evolutionary models"/>
</dbReference>
<dbReference type="PhylomeDB" id="Q8N0U7"/>
<dbReference type="TreeFam" id="TF338576"/>
<dbReference type="PathwayCommons" id="Q8N0U7"/>
<dbReference type="SignaLink" id="Q8N0U7"/>
<dbReference type="BioGRID-ORCS" id="127795">
    <property type="hits" value="19 hits in 1132 CRISPR screens"/>
</dbReference>
<dbReference type="ChiTaRS" id="C1orf87">
    <property type="organism name" value="human"/>
</dbReference>
<dbReference type="GenomeRNAi" id="127795"/>
<dbReference type="Pharos" id="Q8N0U7">
    <property type="development level" value="Tbio"/>
</dbReference>
<dbReference type="PRO" id="PR:Q8N0U7"/>
<dbReference type="Proteomes" id="UP000005640">
    <property type="component" value="Chromosome 1"/>
</dbReference>
<dbReference type="RNAct" id="Q8N0U7">
    <property type="molecule type" value="protein"/>
</dbReference>
<dbReference type="Bgee" id="ENSG00000162598">
    <property type="expression patterns" value="Expressed in bronchial epithelial cell and 97 other cell types or tissues"/>
</dbReference>
<dbReference type="ExpressionAtlas" id="Q8N0U7">
    <property type="expression patterns" value="baseline and differential"/>
</dbReference>
<dbReference type="InterPro" id="IPR040774">
    <property type="entry name" value="DUF5580"/>
</dbReference>
<dbReference type="InterPro" id="IPR049247">
    <property type="entry name" value="DUF5580_C"/>
</dbReference>
<dbReference type="InterPro" id="IPR049246">
    <property type="entry name" value="DUF5580_M"/>
</dbReference>
<dbReference type="InterPro" id="IPR048316">
    <property type="entry name" value="DUF5580_N"/>
</dbReference>
<dbReference type="InterPro" id="IPR011992">
    <property type="entry name" value="EF-hand-dom_pair"/>
</dbReference>
<dbReference type="PANTHER" id="PTHR34830:SF1">
    <property type="entry name" value="GENE 12695-RELATED"/>
    <property type="match status" value="1"/>
</dbReference>
<dbReference type="PANTHER" id="PTHR34830">
    <property type="entry name" value="SIMILAR TO HYPOTHETICAL PROTEIN MGC34837"/>
    <property type="match status" value="1"/>
</dbReference>
<dbReference type="Pfam" id="PF17743">
    <property type="entry name" value="DUF5580"/>
    <property type="match status" value="1"/>
</dbReference>
<dbReference type="Pfam" id="PF20743">
    <property type="entry name" value="DUF5580_C"/>
    <property type="match status" value="1"/>
</dbReference>
<dbReference type="Pfam" id="PF20742">
    <property type="entry name" value="DUF5580_M"/>
    <property type="match status" value="1"/>
</dbReference>
<dbReference type="SUPFAM" id="SSF47473">
    <property type="entry name" value="EF-hand"/>
    <property type="match status" value="1"/>
</dbReference>
<name>CA087_HUMAN</name>
<evidence type="ECO:0000256" key="1">
    <source>
        <dbReference type="SAM" id="MobiDB-lite"/>
    </source>
</evidence>
<evidence type="ECO:0000269" key="2">
    <source>
    </source>
</evidence>
<evidence type="ECO:0000269" key="3">
    <source>
    </source>
</evidence>
<evidence type="ECO:0000303" key="4">
    <source>
    </source>
</evidence>
<evidence type="ECO:0000303" key="5">
    <source>
    </source>
</evidence>
<comment type="alternative products">
    <event type="alternative splicing"/>
    <isoform>
        <id>Q8N0U7-1</id>
        <name>1</name>
        <sequence type="displayed"/>
    </isoform>
    <isoform>
        <id>Q8N0U7-2</id>
        <name>2</name>
        <sequence type="described" ref="VSP_024541 VSP_024542"/>
    </isoform>
    <isoform>
        <id>Q8N0U7-3</id>
        <name>3</name>
        <sequence type="described" ref="VSP_024540"/>
    </isoform>
</comment>